<accession>Q8XH63</accession>
<evidence type="ECO:0000255" key="1">
    <source>
        <dbReference type="HAMAP-Rule" id="MF_00011"/>
    </source>
</evidence>
<gene>
    <name evidence="1" type="primary">purA</name>
    <name type="ordered locus">CPE2622</name>
</gene>
<proteinExistence type="inferred from homology"/>
<feature type="chain" id="PRO_0000095168" description="Adenylosuccinate synthetase">
    <location>
        <begin position="1"/>
        <end position="428"/>
    </location>
</feature>
<feature type="active site" description="Proton acceptor" evidence="1">
    <location>
        <position position="13"/>
    </location>
</feature>
<feature type="active site" description="Proton donor" evidence="1">
    <location>
        <position position="41"/>
    </location>
</feature>
<feature type="binding site" evidence="1">
    <location>
        <begin position="12"/>
        <end position="18"/>
    </location>
    <ligand>
        <name>GTP</name>
        <dbReference type="ChEBI" id="CHEBI:37565"/>
    </ligand>
</feature>
<feature type="binding site" description="in other chain" evidence="1">
    <location>
        <begin position="13"/>
        <end position="16"/>
    </location>
    <ligand>
        <name>IMP</name>
        <dbReference type="ChEBI" id="CHEBI:58053"/>
        <note>ligand shared between dimeric partners</note>
    </ligand>
</feature>
<feature type="binding site" evidence="1">
    <location>
        <position position="13"/>
    </location>
    <ligand>
        <name>Mg(2+)</name>
        <dbReference type="ChEBI" id="CHEBI:18420"/>
    </ligand>
</feature>
<feature type="binding site" description="in other chain" evidence="1">
    <location>
        <begin position="38"/>
        <end position="41"/>
    </location>
    <ligand>
        <name>IMP</name>
        <dbReference type="ChEBI" id="CHEBI:58053"/>
        <note>ligand shared between dimeric partners</note>
    </ligand>
</feature>
<feature type="binding site" evidence="1">
    <location>
        <begin position="40"/>
        <end position="42"/>
    </location>
    <ligand>
        <name>GTP</name>
        <dbReference type="ChEBI" id="CHEBI:37565"/>
    </ligand>
</feature>
<feature type="binding site" evidence="1">
    <location>
        <position position="40"/>
    </location>
    <ligand>
        <name>Mg(2+)</name>
        <dbReference type="ChEBI" id="CHEBI:18420"/>
    </ligand>
</feature>
<feature type="binding site" description="in other chain" evidence="1">
    <location>
        <position position="130"/>
    </location>
    <ligand>
        <name>IMP</name>
        <dbReference type="ChEBI" id="CHEBI:58053"/>
        <note>ligand shared between dimeric partners</note>
    </ligand>
</feature>
<feature type="binding site" evidence="1">
    <location>
        <position position="144"/>
    </location>
    <ligand>
        <name>IMP</name>
        <dbReference type="ChEBI" id="CHEBI:58053"/>
        <note>ligand shared between dimeric partners</note>
    </ligand>
</feature>
<feature type="binding site" description="in other chain" evidence="1">
    <location>
        <position position="224"/>
    </location>
    <ligand>
        <name>IMP</name>
        <dbReference type="ChEBI" id="CHEBI:58053"/>
        <note>ligand shared between dimeric partners</note>
    </ligand>
</feature>
<feature type="binding site" description="in other chain" evidence="1">
    <location>
        <position position="239"/>
    </location>
    <ligand>
        <name>IMP</name>
        <dbReference type="ChEBI" id="CHEBI:58053"/>
        <note>ligand shared between dimeric partners</note>
    </ligand>
</feature>
<feature type="binding site" evidence="1">
    <location>
        <begin position="299"/>
        <end position="305"/>
    </location>
    <ligand>
        <name>substrate</name>
    </ligand>
</feature>
<feature type="binding site" description="in other chain" evidence="1">
    <location>
        <position position="303"/>
    </location>
    <ligand>
        <name>IMP</name>
        <dbReference type="ChEBI" id="CHEBI:58053"/>
        <note>ligand shared between dimeric partners</note>
    </ligand>
</feature>
<feature type="binding site" evidence="1">
    <location>
        <position position="305"/>
    </location>
    <ligand>
        <name>GTP</name>
        <dbReference type="ChEBI" id="CHEBI:37565"/>
    </ligand>
</feature>
<feature type="binding site" evidence="1">
    <location>
        <begin position="331"/>
        <end position="333"/>
    </location>
    <ligand>
        <name>GTP</name>
        <dbReference type="ChEBI" id="CHEBI:37565"/>
    </ligand>
</feature>
<feature type="binding site" evidence="1">
    <location>
        <begin position="413"/>
        <end position="415"/>
    </location>
    <ligand>
        <name>GTP</name>
        <dbReference type="ChEBI" id="CHEBI:37565"/>
    </ligand>
</feature>
<keyword id="KW-0963">Cytoplasm</keyword>
<keyword id="KW-0342">GTP-binding</keyword>
<keyword id="KW-0436">Ligase</keyword>
<keyword id="KW-0460">Magnesium</keyword>
<keyword id="KW-0479">Metal-binding</keyword>
<keyword id="KW-0547">Nucleotide-binding</keyword>
<keyword id="KW-0658">Purine biosynthesis</keyword>
<keyword id="KW-1185">Reference proteome</keyword>
<reference key="1">
    <citation type="journal article" date="2002" name="Proc. Natl. Acad. Sci. U.S.A.">
        <title>Complete genome sequence of Clostridium perfringens, an anaerobic flesh-eater.</title>
        <authorList>
            <person name="Shimizu T."/>
            <person name="Ohtani K."/>
            <person name="Hirakawa H."/>
            <person name="Ohshima K."/>
            <person name="Yamashita A."/>
            <person name="Shiba T."/>
            <person name="Ogasawara N."/>
            <person name="Hattori M."/>
            <person name="Kuhara S."/>
            <person name="Hayashi H."/>
        </authorList>
    </citation>
    <scope>NUCLEOTIDE SEQUENCE [LARGE SCALE GENOMIC DNA]</scope>
    <source>
        <strain>13 / Type A</strain>
    </source>
</reference>
<comment type="function">
    <text evidence="1">Plays an important role in the de novo pathway of purine nucleotide biosynthesis. Catalyzes the first committed step in the biosynthesis of AMP from IMP.</text>
</comment>
<comment type="catalytic activity">
    <reaction evidence="1">
        <text>IMP + L-aspartate + GTP = N(6)-(1,2-dicarboxyethyl)-AMP + GDP + phosphate + 2 H(+)</text>
        <dbReference type="Rhea" id="RHEA:15753"/>
        <dbReference type="ChEBI" id="CHEBI:15378"/>
        <dbReference type="ChEBI" id="CHEBI:29991"/>
        <dbReference type="ChEBI" id="CHEBI:37565"/>
        <dbReference type="ChEBI" id="CHEBI:43474"/>
        <dbReference type="ChEBI" id="CHEBI:57567"/>
        <dbReference type="ChEBI" id="CHEBI:58053"/>
        <dbReference type="ChEBI" id="CHEBI:58189"/>
        <dbReference type="EC" id="6.3.4.4"/>
    </reaction>
</comment>
<comment type="cofactor">
    <cofactor evidence="1">
        <name>Mg(2+)</name>
        <dbReference type="ChEBI" id="CHEBI:18420"/>
    </cofactor>
    <text evidence="1">Binds 1 Mg(2+) ion per subunit.</text>
</comment>
<comment type="pathway">
    <text evidence="1">Purine metabolism; AMP biosynthesis via de novo pathway; AMP from IMP: step 1/2.</text>
</comment>
<comment type="subunit">
    <text evidence="1">Homodimer.</text>
</comment>
<comment type="subcellular location">
    <subcellularLocation>
        <location evidence="1">Cytoplasm</location>
    </subcellularLocation>
</comment>
<comment type="similarity">
    <text evidence="1">Belongs to the adenylosuccinate synthetase family.</text>
</comment>
<sequence>MSAFVVLGAQWGDEGKGKMTDYLAEEAEVVVRFQGGNNAGHTVEVEDKQYKLHLIPSGILHDEKLNVIGNGVVVDPKALFTEIDYLEGLGVKVTPEKLIVSDRAHLIMPYHITLDKLKEKARGKNDIGTTCKGIGPCYTDKYERSGIRVCDLMHKDSFAEKLRINIEMKNGYIKLLGGEELNFDEIYNEYMAFAERLRPYVKDTSVEIYNAIQADKNVLFEGAQGMLLDIDYGTYPYVTSSNTTSCGVASGAGIGPNMVTNAVGIAKAYTTRVGKGPFPTELENETGDWIREKGHEYGVTTGRSRRCGWLDLVILKTTTRVCGLTSLVVTKIDTLAGLDKIQMCVGYELDGKVIDYFPASLEDLARCKPVYEEFEGWGEEVADARSYEELPENAKTYLRRIEEFTGTKVSIVGVGPKRNQTIRVREEL</sequence>
<dbReference type="EC" id="6.3.4.4" evidence="1"/>
<dbReference type="EMBL" id="BA000016">
    <property type="protein sequence ID" value="BAB82328.1"/>
    <property type="molecule type" value="Genomic_DNA"/>
</dbReference>
<dbReference type="RefSeq" id="WP_003450991.1">
    <property type="nucleotide sequence ID" value="NC_003366.1"/>
</dbReference>
<dbReference type="SMR" id="Q8XH63"/>
<dbReference type="STRING" id="195102.gene:10491966"/>
<dbReference type="KEGG" id="cpe:CPE2622"/>
<dbReference type="HOGENOM" id="CLU_029848_0_0_9"/>
<dbReference type="UniPathway" id="UPA00075">
    <property type="reaction ID" value="UER00335"/>
</dbReference>
<dbReference type="Proteomes" id="UP000000818">
    <property type="component" value="Chromosome"/>
</dbReference>
<dbReference type="GO" id="GO:0005737">
    <property type="term" value="C:cytoplasm"/>
    <property type="evidence" value="ECO:0007669"/>
    <property type="project" value="UniProtKB-SubCell"/>
</dbReference>
<dbReference type="GO" id="GO:0004019">
    <property type="term" value="F:adenylosuccinate synthase activity"/>
    <property type="evidence" value="ECO:0007669"/>
    <property type="project" value="UniProtKB-UniRule"/>
</dbReference>
<dbReference type="GO" id="GO:0005525">
    <property type="term" value="F:GTP binding"/>
    <property type="evidence" value="ECO:0007669"/>
    <property type="project" value="UniProtKB-UniRule"/>
</dbReference>
<dbReference type="GO" id="GO:0000287">
    <property type="term" value="F:magnesium ion binding"/>
    <property type="evidence" value="ECO:0007669"/>
    <property type="project" value="UniProtKB-UniRule"/>
</dbReference>
<dbReference type="GO" id="GO:0044208">
    <property type="term" value="P:'de novo' AMP biosynthetic process"/>
    <property type="evidence" value="ECO:0007669"/>
    <property type="project" value="UniProtKB-UniRule"/>
</dbReference>
<dbReference type="GO" id="GO:0046040">
    <property type="term" value="P:IMP metabolic process"/>
    <property type="evidence" value="ECO:0007669"/>
    <property type="project" value="TreeGrafter"/>
</dbReference>
<dbReference type="CDD" id="cd03108">
    <property type="entry name" value="AdSS"/>
    <property type="match status" value="1"/>
</dbReference>
<dbReference type="FunFam" id="1.10.300.10:FF:000001">
    <property type="entry name" value="Adenylosuccinate synthetase"/>
    <property type="match status" value="1"/>
</dbReference>
<dbReference type="FunFam" id="3.90.170.10:FF:000001">
    <property type="entry name" value="Adenylosuccinate synthetase"/>
    <property type="match status" value="1"/>
</dbReference>
<dbReference type="Gene3D" id="3.40.440.10">
    <property type="entry name" value="Adenylosuccinate Synthetase, subunit A, domain 1"/>
    <property type="match status" value="1"/>
</dbReference>
<dbReference type="Gene3D" id="1.10.300.10">
    <property type="entry name" value="Adenylosuccinate Synthetase, subunit A, domain 2"/>
    <property type="match status" value="1"/>
</dbReference>
<dbReference type="Gene3D" id="3.90.170.10">
    <property type="entry name" value="Adenylosuccinate Synthetase, subunit A, domain 3"/>
    <property type="match status" value="1"/>
</dbReference>
<dbReference type="HAMAP" id="MF_00011">
    <property type="entry name" value="Adenylosucc_synth"/>
    <property type="match status" value="1"/>
</dbReference>
<dbReference type="InterPro" id="IPR018220">
    <property type="entry name" value="Adenylosuccin_syn_GTP-bd"/>
</dbReference>
<dbReference type="InterPro" id="IPR033128">
    <property type="entry name" value="Adenylosuccin_syn_Lys_AS"/>
</dbReference>
<dbReference type="InterPro" id="IPR042109">
    <property type="entry name" value="Adenylosuccinate_synth_dom1"/>
</dbReference>
<dbReference type="InterPro" id="IPR042110">
    <property type="entry name" value="Adenylosuccinate_synth_dom2"/>
</dbReference>
<dbReference type="InterPro" id="IPR042111">
    <property type="entry name" value="Adenylosuccinate_synth_dom3"/>
</dbReference>
<dbReference type="InterPro" id="IPR001114">
    <property type="entry name" value="Adenylosuccinate_synthetase"/>
</dbReference>
<dbReference type="InterPro" id="IPR027417">
    <property type="entry name" value="P-loop_NTPase"/>
</dbReference>
<dbReference type="NCBIfam" id="NF002223">
    <property type="entry name" value="PRK01117.1"/>
    <property type="match status" value="1"/>
</dbReference>
<dbReference type="NCBIfam" id="TIGR00184">
    <property type="entry name" value="purA"/>
    <property type="match status" value="1"/>
</dbReference>
<dbReference type="PANTHER" id="PTHR11846">
    <property type="entry name" value="ADENYLOSUCCINATE SYNTHETASE"/>
    <property type="match status" value="1"/>
</dbReference>
<dbReference type="PANTHER" id="PTHR11846:SF0">
    <property type="entry name" value="ADENYLOSUCCINATE SYNTHETASE"/>
    <property type="match status" value="1"/>
</dbReference>
<dbReference type="Pfam" id="PF00709">
    <property type="entry name" value="Adenylsucc_synt"/>
    <property type="match status" value="1"/>
</dbReference>
<dbReference type="SMART" id="SM00788">
    <property type="entry name" value="Adenylsucc_synt"/>
    <property type="match status" value="1"/>
</dbReference>
<dbReference type="SUPFAM" id="SSF52540">
    <property type="entry name" value="P-loop containing nucleoside triphosphate hydrolases"/>
    <property type="match status" value="1"/>
</dbReference>
<dbReference type="PROSITE" id="PS01266">
    <property type="entry name" value="ADENYLOSUCCIN_SYN_1"/>
    <property type="match status" value="1"/>
</dbReference>
<dbReference type="PROSITE" id="PS00513">
    <property type="entry name" value="ADENYLOSUCCIN_SYN_2"/>
    <property type="match status" value="1"/>
</dbReference>
<name>PURA_CLOPE</name>
<organism>
    <name type="scientific">Clostridium perfringens (strain 13 / Type A)</name>
    <dbReference type="NCBI Taxonomy" id="195102"/>
    <lineage>
        <taxon>Bacteria</taxon>
        <taxon>Bacillati</taxon>
        <taxon>Bacillota</taxon>
        <taxon>Clostridia</taxon>
        <taxon>Eubacteriales</taxon>
        <taxon>Clostridiaceae</taxon>
        <taxon>Clostridium</taxon>
    </lineage>
</organism>
<protein>
    <recommendedName>
        <fullName evidence="1">Adenylosuccinate synthetase</fullName>
        <shortName evidence="1">AMPSase</shortName>
        <shortName evidence="1">AdSS</shortName>
        <ecNumber evidence="1">6.3.4.4</ecNumber>
    </recommendedName>
    <alternativeName>
        <fullName evidence="1">IMP--aspartate ligase</fullName>
    </alternativeName>
</protein>